<dbReference type="EMBL" id="AE007317">
    <property type="protein sequence ID" value="AAK99257.1"/>
    <property type="status" value="ALT_INIT"/>
    <property type="molecule type" value="Genomic_DNA"/>
</dbReference>
<dbReference type="PIR" id="E97928">
    <property type="entry name" value="E97928"/>
</dbReference>
<dbReference type="RefSeq" id="NP_358047.1">
    <property type="nucleotide sequence ID" value="NC_003098.1"/>
</dbReference>
<dbReference type="RefSeq" id="WP_000255770.1">
    <property type="nucleotide sequence ID" value="NC_003098.1"/>
</dbReference>
<dbReference type="SMR" id="Q8DQW9"/>
<dbReference type="STRING" id="171101.spr0453"/>
<dbReference type="KEGG" id="spr:spr0453"/>
<dbReference type="PATRIC" id="fig|171101.6.peg.500"/>
<dbReference type="eggNOG" id="COG1420">
    <property type="taxonomic scope" value="Bacteria"/>
</dbReference>
<dbReference type="HOGENOM" id="CLU_050019_1_0_9"/>
<dbReference type="Proteomes" id="UP000000586">
    <property type="component" value="Chromosome"/>
</dbReference>
<dbReference type="GO" id="GO:0003677">
    <property type="term" value="F:DNA binding"/>
    <property type="evidence" value="ECO:0007669"/>
    <property type="project" value="InterPro"/>
</dbReference>
<dbReference type="GO" id="GO:0045892">
    <property type="term" value="P:negative regulation of DNA-templated transcription"/>
    <property type="evidence" value="ECO:0000318"/>
    <property type="project" value="GO_Central"/>
</dbReference>
<dbReference type="Gene3D" id="3.30.450.40">
    <property type="match status" value="1"/>
</dbReference>
<dbReference type="Gene3D" id="3.30.390.60">
    <property type="entry name" value="Heat-inducible transcription repressor hrca homolog, domain 3"/>
    <property type="match status" value="1"/>
</dbReference>
<dbReference type="Gene3D" id="1.10.10.10">
    <property type="entry name" value="Winged helix-like DNA-binding domain superfamily/Winged helix DNA-binding domain"/>
    <property type="match status" value="1"/>
</dbReference>
<dbReference type="HAMAP" id="MF_00081">
    <property type="entry name" value="HrcA"/>
    <property type="match status" value="1"/>
</dbReference>
<dbReference type="InterPro" id="IPR029016">
    <property type="entry name" value="GAF-like_dom_sf"/>
</dbReference>
<dbReference type="InterPro" id="IPR002571">
    <property type="entry name" value="HrcA"/>
</dbReference>
<dbReference type="InterPro" id="IPR021153">
    <property type="entry name" value="HrcA_C"/>
</dbReference>
<dbReference type="InterPro" id="IPR036388">
    <property type="entry name" value="WH-like_DNA-bd_sf"/>
</dbReference>
<dbReference type="InterPro" id="IPR036390">
    <property type="entry name" value="WH_DNA-bd_sf"/>
</dbReference>
<dbReference type="InterPro" id="IPR005104">
    <property type="entry name" value="WHTH_HrcA_DNA-bd"/>
</dbReference>
<dbReference type="InterPro" id="IPR023120">
    <property type="entry name" value="WHTH_transcript_rep_HrcA_IDD"/>
</dbReference>
<dbReference type="NCBIfam" id="TIGR00331">
    <property type="entry name" value="hrcA"/>
    <property type="match status" value="1"/>
</dbReference>
<dbReference type="PANTHER" id="PTHR34824">
    <property type="entry name" value="HEAT-INDUCIBLE TRANSCRIPTION REPRESSOR HRCA"/>
    <property type="match status" value="1"/>
</dbReference>
<dbReference type="PANTHER" id="PTHR34824:SF1">
    <property type="entry name" value="HEAT-INDUCIBLE TRANSCRIPTION REPRESSOR HRCA"/>
    <property type="match status" value="1"/>
</dbReference>
<dbReference type="Pfam" id="PF01628">
    <property type="entry name" value="HrcA"/>
    <property type="match status" value="1"/>
</dbReference>
<dbReference type="Pfam" id="PF03444">
    <property type="entry name" value="HrcA_DNA-bdg"/>
    <property type="match status" value="1"/>
</dbReference>
<dbReference type="PIRSF" id="PIRSF005485">
    <property type="entry name" value="HrcA"/>
    <property type="match status" value="1"/>
</dbReference>
<dbReference type="SUPFAM" id="SSF55781">
    <property type="entry name" value="GAF domain-like"/>
    <property type="match status" value="1"/>
</dbReference>
<dbReference type="SUPFAM" id="SSF46785">
    <property type="entry name" value="Winged helix' DNA-binding domain"/>
    <property type="match status" value="1"/>
</dbReference>
<gene>
    <name evidence="1" type="primary">hrcA</name>
    <name type="ordered locus">spr0453</name>
</gene>
<feature type="chain" id="PRO_0000182541" description="Heat-inducible transcription repressor HrcA">
    <location>
        <begin position="1"/>
        <end position="344"/>
    </location>
</feature>
<comment type="function">
    <text evidence="1">Negative regulator of class I heat shock genes (grpE-dnaK-dnaJ and groELS operons). Prevents heat-shock induction of these operons.</text>
</comment>
<comment type="similarity">
    <text evidence="1">Belongs to the HrcA family.</text>
</comment>
<comment type="sequence caution" evidence="2">
    <conflict type="erroneous initiation">
        <sequence resource="EMBL-CDS" id="AAK99257"/>
    </conflict>
</comment>
<protein>
    <recommendedName>
        <fullName evidence="1">Heat-inducible transcription repressor HrcA</fullName>
    </recommendedName>
</protein>
<proteinExistence type="inferred from homology"/>
<sequence>MVTERQQDILNLIIDIFTKTHEPVGSKALQESINSSSATIRNDMAELEKQGLLEKAHTSSGRMPSVAGFQYYVKHSLDFDRLAENEVYEIVKAFDQEFFKLEDILQEAANLLTDLSGCTVVALDVEPSRQRLTAFDIVVLGQHTALAVFTLDESRTVTSQFLIPRNFLQEDLLKLKSIIQERFLGHTVLDIHYKIRTEIPQIIQRYFTTTDNVIDLFEHIFKEMFNENIVMAGKVNLLNFANLAAYQFFDQPQKVALEIREGLREDQMQNVRVADGQESCLADLAVISSKFLIPYRGVGILAIIGPVNLDYQQLINQINVVNRVLTMKLTDFYRYLSSNHYEVH</sequence>
<organism>
    <name type="scientific">Streptococcus pneumoniae (strain ATCC BAA-255 / R6)</name>
    <dbReference type="NCBI Taxonomy" id="171101"/>
    <lineage>
        <taxon>Bacteria</taxon>
        <taxon>Bacillati</taxon>
        <taxon>Bacillota</taxon>
        <taxon>Bacilli</taxon>
        <taxon>Lactobacillales</taxon>
        <taxon>Streptococcaceae</taxon>
        <taxon>Streptococcus</taxon>
    </lineage>
</organism>
<name>HRCA_STRR6</name>
<evidence type="ECO:0000255" key="1">
    <source>
        <dbReference type="HAMAP-Rule" id="MF_00081"/>
    </source>
</evidence>
<evidence type="ECO:0000305" key="2"/>
<reference key="1">
    <citation type="journal article" date="2001" name="J. Bacteriol.">
        <title>Genome of the bacterium Streptococcus pneumoniae strain R6.</title>
        <authorList>
            <person name="Hoskins J."/>
            <person name="Alborn W.E. Jr."/>
            <person name="Arnold J."/>
            <person name="Blaszczak L.C."/>
            <person name="Burgett S."/>
            <person name="DeHoff B.S."/>
            <person name="Estrem S.T."/>
            <person name="Fritz L."/>
            <person name="Fu D.-J."/>
            <person name="Fuller W."/>
            <person name="Geringer C."/>
            <person name="Gilmour R."/>
            <person name="Glass J.S."/>
            <person name="Khoja H."/>
            <person name="Kraft A.R."/>
            <person name="Lagace R.E."/>
            <person name="LeBlanc D.J."/>
            <person name="Lee L.N."/>
            <person name="Lefkowitz E.J."/>
            <person name="Lu J."/>
            <person name="Matsushima P."/>
            <person name="McAhren S.M."/>
            <person name="McHenney M."/>
            <person name="McLeaster K."/>
            <person name="Mundy C.W."/>
            <person name="Nicas T.I."/>
            <person name="Norris F.H."/>
            <person name="O'Gara M."/>
            <person name="Peery R.B."/>
            <person name="Robertson G.T."/>
            <person name="Rockey P."/>
            <person name="Sun P.-M."/>
            <person name="Winkler M.E."/>
            <person name="Yang Y."/>
            <person name="Young-Bellido M."/>
            <person name="Zhao G."/>
            <person name="Zook C.A."/>
            <person name="Baltz R.H."/>
            <person name="Jaskunas S.R."/>
            <person name="Rosteck P.R. Jr."/>
            <person name="Skatrud P.L."/>
            <person name="Glass J.I."/>
        </authorList>
    </citation>
    <scope>NUCLEOTIDE SEQUENCE [LARGE SCALE GENOMIC DNA]</scope>
    <source>
        <strain>ATCC BAA-255 / R6</strain>
    </source>
</reference>
<keyword id="KW-1185">Reference proteome</keyword>
<keyword id="KW-0678">Repressor</keyword>
<keyword id="KW-0346">Stress response</keyword>
<keyword id="KW-0804">Transcription</keyword>
<keyword id="KW-0805">Transcription regulation</keyword>
<accession>Q8DQW9</accession>